<keyword id="KW-0028">Amino-acid biosynthesis</keyword>
<keyword id="KW-0210">Decarboxylase</keyword>
<keyword id="KW-0456">Lyase</keyword>
<keyword id="KW-0457">Lysine biosynthesis</keyword>
<keyword id="KW-0663">Pyridoxal phosphate</keyword>
<keyword id="KW-1185">Reference proteome</keyword>
<feature type="chain" id="PRO_0000149925" description="Diaminopimelate decarboxylase">
    <location>
        <begin position="1"/>
        <end position="405"/>
    </location>
</feature>
<feature type="active site" description="Proton donor" evidence="1">
    <location>
        <position position="329"/>
    </location>
</feature>
<feature type="binding site" evidence="2">
    <location>
        <position position="225"/>
    </location>
    <ligand>
        <name>pyridoxal 5'-phosphate</name>
        <dbReference type="ChEBI" id="CHEBI:597326"/>
    </ligand>
</feature>
<feature type="binding site" evidence="2">
    <location>
        <begin position="259"/>
        <end position="262"/>
    </location>
    <ligand>
        <name>pyridoxal 5'-phosphate</name>
        <dbReference type="ChEBI" id="CHEBI:597326"/>
    </ligand>
</feature>
<feature type="binding site" evidence="2">
    <location>
        <position position="262"/>
    </location>
    <ligand>
        <name>substrate</name>
    </ligand>
</feature>
<feature type="binding site" evidence="2">
    <location>
        <position position="298"/>
    </location>
    <ligand>
        <name>substrate</name>
    </ligand>
</feature>
<feature type="binding site" evidence="2">
    <location>
        <position position="302"/>
    </location>
    <ligand>
        <name>substrate</name>
    </ligand>
</feature>
<feature type="binding site" evidence="2">
    <location>
        <position position="330"/>
    </location>
    <ligand>
        <name>substrate</name>
    </ligand>
</feature>
<feature type="binding site" evidence="2">
    <location>
        <position position="358"/>
    </location>
    <ligand>
        <name>pyridoxal 5'-phosphate</name>
        <dbReference type="ChEBI" id="CHEBI:597326"/>
    </ligand>
</feature>
<feature type="binding site" evidence="2">
    <location>
        <position position="358"/>
    </location>
    <ligand>
        <name>substrate</name>
    </ligand>
</feature>
<feature type="modified residue" description="N6-(pyridoxal phosphate)lysine" evidence="2">
    <location>
        <position position="46"/>
    </location>
</feature>
<name>DCDA_HELPY</name>
<evidence type="ECO:0000255" key="1"/>
<evidence type="ECO:0000255" key="2">
    <source>
        <dbReference type="HAMAP-Rule" id="MF_02120"/>
    </source>
</evidence>
<organism>
    <name type="scientific">Helicobacter pylori (strain ATCC 700392 / 26695)</name>
    <name type="common">Campylobacter pylori</name>
    <dbReference type="NCBI Taxonomy" id="85962"/>
    <lineage>
        <taxon>Bacteria</taxon>
        <taxon>Pseudomonadati</taxon>
        <taxon>Campylobacterota</taxon>
        <taxon>Epsilonproteobacteria</taxon>
        <taxon>Campylobacterales</taxon>
        <taxon>Helicobacteraceae</taxon>
        <taxon>Helicobacter</taxon>
    </lineage>
</organism>
<reference key="1">
    <citation type="journal article" date="1997" name="Nature">
        <title>The complete genome sequence of the gastric pathogen Helicobacter pylori.</title>
        <authorList>
            <person name="Tomb J.-F."/>
            <person name="White O."/>
            <person name="Kerlavage A.R."/>
            <person name="Clayton R.A."/>
            <person name="Sutton G.G."/>
            <person name="Fleischmann R.D."/>
            <person name="Ketchum K.A."/>
            <person name="Klenk H.-P."/>
            <person name="Gill S.R."/>
            <person name="Dougherty B.A."/>
            <person name="Nelson K.E."/>
            <person name="Quackenbush J."/>
            <person name="Zhou L."/>
            <person name="Kirkness E.F."/>
            <person name="Peterson S.N."/>
            <person name="Loftus B.J."/>
            <person name="Richardson D.L."/>
            <person name="Dodson R.J."/>
            <person name="Khalak H.G."/>
            <person name="Glodek A."/>
            <person name="McKenney K."/>
            <person name="FitzGerald L.M."/>
            <person name="Lee N."/>
            <person name="Adams M.D."/>
            <person name="Hickey E.K."/>
            <person name="Berg D.E."/>
            <person name="Gocayne J.D."/>
            <person name="Utterback T.R."/>
            <person name="Peterson J.D."/>
            <person name="Kelley J.M."/>
            <person name="Cotton M.D."/>
            <person name="Weidman J.F."/>
            <person name="Fujii C."/>
            <person name="Bowman C."/>
            <person name="Watthey L."/>
            <person name="Wallin E."/>
            <person name="Hayes W.S."/>
            <person name="Borodovsky M."/>
            <person name="Karp P.D."/>
            <person name="Smith H.O."/>
            <person name="Fraser C.M."/>
            <person name="Venter J.C."/>
        </authorList>
    </citation>
    <scope>NUCLEOTIDE SEQUENCE [LARGE SCALE GENOMIC DNA]</scope>
    <source>
        <strain>ATCC 700392 / 26695</strain>
    </source>
</reference>
<comment type="function">
    <text evidence="2">Specifically catalyzes the decarboxylation of meso-diaminopimelate (meso-DAP) to L-lysine.</text>
</comment>
<comment type="catalytic activity">
    <reaction evidence="2">
        <text>meso-2,6-diaminopimelate + H(+) = L-lysine + CO2</text>
        <dbReference type="Rhea" id="RHEA:15101"/>
        <dbReference type="ChEBI" id="CHEBI:15378"/>
        <dbReference type="ChEBI" id="CHEBI:16526"/>
        <dbReference type="ChEBI" id="CHEBI:32551"/>
        <dbReference type="ChEBI" id="CHEBI:57791"/>
        <dbReference type="EC" id="4.1.1.20"/>
    </reaction>
</comment>
<comment type="cofactor">
    <cofactor evidence="2">
        <name>pyridoxal 5'-phosphate</name>
        <dbReference type="ChEBI" id="CHEBI:597326"/>
    </cofactor>
</comment>
<comment type="pathway">
    <text evidence="2">Amino-acid biosynthesis; L-lysine biosynthesis via DAP pathway; L-lysine from DL-2,6-diaminopimelate: step 1/1.</text>
</comment>
<comment type="subunit">
    <text evidence="2">Homodimer.</text>
</comment>
<comment type="similarity">
    <text evidence="2">Belongs to the Orn/Lys/Arg decarboxylase class-II family. LysA subfamily.</text>
</comment>
<proteinExistence type="inferred from homology"/>
<protein>
    <recommendedName>
        <fullName evidence="2">Diaminopimelate decarboxylase</fullName>
        <shortName evidence="2">DAP decarboxylase</shortName>
        <shortName evidence="2">DAPDC</shortName>
        <ecNumber evidence="2">4.1.1.20</ecNumber>
    </recommendedName>
</protein>
<gene>
    <name evidence="2" type="primary">lysA</name>
    <name type="ordered locus">HP_0290</name>
</gene>
<sequence>MFNYEELFQTHKTPFYLYDFDKIKQAFLNYKEAFKGRKSLICYALKANSNLSILSLLAHLESGADCVSIGEIYRALKAGIKPYRIVFSGVGKSGFEIEQALKLNILFLNVESFMELTTIETIAQSLGIKARISIRINPNIDAKTHPYISTGLKENKFGVGEKEALEMFLWAKKSAFLEPVSVHFHIGSQLSDLEPIIEASQKVAKIAKSLIALGIDLRFFDVGGGIGVSYENEETIKLYDYAQGILNSLQGLDLTIICEPGRSIVAESGELITQVLYEKKAQNKRFVVVDAGMNDFLRPSLYHAKHAIRVITPSKGREISPCDVVGPVCESSDTFLKDAHLPELEPGDKLVIEKVGAYGSSMASQYNSRPKLLELALEDHKIRVIRKREALEDLWRLEEEGLKGV</sequence>
<dbReference type="EC" id="4.1.1.20" evidence="2"/>
<dbReference type="EMBL" id="AE000511">
    <property type="protein sequence ID" value="AAD07356.1"/>
    <property type="molecule type" value="Genomic_DNA"/>
</dbReference>
<dbReference type="PIR" id="B64556">
    <property type="entry name" value="B64556"/>
</dbReference>
<dbReference type="RefSeq" id="NP_207088.1">
    <property type="nucleotide sequence ID" value="NC_000915.1"/>
</dbReference>
<dbReference type="RefSeq" id="WP_000483597.1">
    <property type="nucleotide sequence ID" value="NC_018939.1"/>
</dbReference>
<dbReference type="SMR" id="P56129"/>
<dbReference type="FunCoup" id="P56129">
    <property type="interactions" value="294"/>
</dbReference>
<dbReference type="STRING" id="85962.HP_0290"/>
<dbReference type="PaxDb" id="85962-C694_01465"/>
<dbReference type="EnsemblBacteria" id="AAD07356">
    <property type="protein sequence ID" value="AAD07356"/>
    <property type="gene ID" value="HP_0290"/>
</dbReference>
<dbReference type="KEGG" id="heo:C694_01465"/>
<dbReference type="KEGG" id="hpy:HP_0290"/>
<dbReference type="PATRIC" id="fig|85962.47.peg.310"/>
<dbReference type="eggNOG" id="COG0019">
    <property type="taxonomic scope" value="Bacteria"/>
</dbReference>
<dbReference type="InParanoid" id="P56129"/>
<dbReference type="OrthoDB" id="9802241at2"/>
<dbReference type="PhylomeDB" id="P56129"/>
<dbReference type="BRENDA" id="4.1.1.20">
    <property type="organism ID" value="2604"/>
</dbReference>
<dbReference type="UniPathway" id="UPA00034">
    <property type="reaction ID" value="UER00027"/>
</dbReference>
<dbReference type="Proteomes" id="UP000000429">
    <property type="component" value="Chromosome"/>
</dbReference>
<dbReference type="GO" id="GO:0008836">
    <property type="term" value="F:diaminopimelate decarboxylase activity"/>
    <property type="evidence" value="ECO:0000318"/>
    <property type="project" value="GO_Central"/>
</dbReference>
<dbReference type="GO" id="GO:0030170">
    <property type="term" value="F:pyridoxal phosphate binding"/>
    <property type="evidence" value="ECO:0007669"/>
    <property type="project" value="UniProtKB-UniRule"/>
</dbReference>
<dbReference type="GO" id="GO:0009089">
    <property type="term" value="P:lysine biosynthetic process via diaminopimelate"/>
    <property type="evidence" value="ECO:0000318"/>
    <property type="project" value="GO_Central"/>
</dbReference>
<dbReference type="CDD" id="cd06828">
    <property type="entry name" value="PLPDE_III_DapDC"/>
    <property type="match status" value="1"/>
</dbReference>
<dbReference type="FunFam" id="2.40.37.10:FF:000019">
    <property type="entry name" value="Diaminopimelate decarboxylase"/>
    <property type="match status" value="1"/>
</dbReference>
<dbReference type="FunFam" id="3.20.20.10:FF:000003">
    <property type="entry name" value="Diaminopimelate decarboxylase"/>
    <property type="match status" value="1"/>
</dbReference>
<dbReference type="Gene3D" id="3.20.20.10">
    <property type="entry name" value="Alanine racemase"/>
    <property type="match status" value="1"/>
</dbReference>
<dbReference type="Gene3D" id="2.40.37.10">
    <property type="entry name" value="Lyase, Ornithine Decarboxylase, Chain A, domain 1"/>
    <property type="match status" value="1"/>
</dbReference>
<dbReference type="HAMAP" id="MF_02120">
    <property type="entry name" value="LysA"/>
    <property type="match status" value="1"/>
</dbReference>
<dbReference type="InterPro" id="IPR009006">
    <property type="entry name" value="Ala_racemase/Decarboxylase_C"/>
</dbReference>
<dbReference type="InterPro" id="IPR002986">
    <property type="entry name" value="DAP_deCOOHase_LysA"/>
</dbReference>
<dbReference type="InterPro" id="IPR022643">
    <property type="entry name" value="De-COase2_C"/>
</dbReference>
<dbReference type="InterPro" id="IPR022644">
    <property type="entry name" value="De-COase2_N"/>
</dbReference>
<dbReference type="InterPro" id="IPR022653">
    <property type="entry name" value="De-COase2_pyr-phos_BS"/>
</dbReference>
<dbReference type="InterPro" id="IPR000183">
    <property type="entry name" value="Orn/DAP/Arg_de-COase"/>
</dbReference>
<dbReference type="InterPro" id="IPR029066">
    <property type="entry name" value="PLP-binding_barrel"/>
</dbReference>
<dbReference type="NCBIfam" id="TIGR01048">
    <property type="entry name" value="lysA"/>
    <property type="match status" value="1"/>
</dbReference>
<dbReference type="PANTHER" id="PTHR43727">
    <property type="entry name" value="DIAMINOPIMELATE DECARBOXYLASE"/>
    <property type="match status" value="1"/>
</dbReference>
<dbReference type="PANTHER" id="PTHR43727:SF2">
    <property type="entry name" value="GROUP IV DECARBOXYLASE"/>
    <property type="match status" value="1"/>
</dbReference>
<dbReference type="Pfam" id="PF02784">
    <property type="entry name" value="Orn_Arg_deC_N"/>
    <property type="match status" value="1"/>
</dbReference>
<dbReference type="Pfam" id="PF00278">
    <property type="entry name" value="Orn_DAP_Arg_deC"/>
    <property type="match status" value="1"/>
</dbReference>
<dbReference type="PRINTS" id="PR01181">
    <property type="entry name" value="DAPDCRBXLASE"/>
</dbReference>
<dbReference type="PRINTS" id="PR01179">
    <property type="entry name" value="ODADCRBXLASE"/>
</dbReference>
<dbReference type="SUPFAM" id="SSF50621">
    <property type="entry name" value="Alanine racemase C-terminal domain-like"/>
    <property type="match status" value="1"/>
</dbReference>
<dbReference type="SUPFAM" id="SSF51419">
    <property type="entry name" value="PLP-binding barrel"/>
    <property type="match status" value="1"/>
</dbReference>
<dbReference type="PROSITE" id="PS00878">
    <property type="entry name" value="ODR_DC_2_1"/>
    <property type="match status" value="1"/>
</dbReference>
<dbReference type="PROSITE" id="PS00879">
    <property type="entry name" value="ODR_DC_2_2"/>
    <property type="match status" value="1"/>
</dbReference>
<accession>P56129</accession>